<protein>
    <recommendedName>
        <fullName evidence="1">Large ribosomal subunit protein uL18</fullName>
    </recommendedName>
    <alternativeName>
        <fullName evidence="2">50S ribosomal protein L18</fullName>
    </alternativeName>
</protein>
<dbReference type="EMBL" id="AE008384">
    <property type="protein sequence ID" value="AAM31839.1"/>
    <property type="status" value="ALT_INIT"/>
    <property type="molecule type" value="Genomic_DNA"/>
</dbReference>
<dbReference type="RefSeq" id="WP_011034074.1">
    <property type="nucleotide sequence ID" value="NC_003901.1"/>
</dbReference>
<dbReference type="SMR" id="Q8PV31"/>
<dbReference type="KEGG" id="mma:MM_2143"/>
<dbReference type="PATRIC" id="fig|192952.21.peg.2457"/>
<dbReference type="eggNOG" id="arCOG04088">
    <property type="taxonomic scope" value="Archaea"/>
</dbReference>
<dbReference type="HOGENOM" id="CLU_056222_2_0_2"/>
<dbReference type="Proteomes" id="UP000000595">
    <property type="component" value="Chromosome"/>
</dbReference>
<dbReference type="GO" id="GO:0022625">
    <property type="term" value="C:cytosolic large ribosomal subunit"/>
    <property type="evidence" value="ECO:0007669"/>
    <property type="project" value="TreeGrafter"/>
</dbReference>
<dbReference type="GO" id="GO:0008097">
    <property type="term" value="F:5S rRNA binding"/>
    <property type="evidence" value="ECO:0007669"/>
    <property type="project" value="InterPro"/>
</dbReference>
<dbReference type="GO" id="GO:0003735">
    <property type="term" value="F:structural constituent of ribosome"/>
    <property type="evidence" value="ECO:0007669"/>
    <property type="project" value="InterPro"/>
</dbReference>
<dbReference type="GO" id="GO:0000027">
    <property type="term" value="P:ribosomal large subunit assembly"/>
    <property type="evidence" value="ECO:0007669"/>
    <property type="project" value="TreeGrafter"/>
</dbReference>
<dbReference type="GO" id="GO:0006412">
    <property type="term" value="P:translation"/>
    <property type="evidence" value="ECO:0007669"/>
    <property type="project" value="UniProtKB-UniRule"/>
</dbReference>
<dbReference type="CDD" id="cd00432">
    <property type="entry name" value="Ribosomal_L18_L5e"/>
    <property type="match status" value="1"/>
</dbReference>
<dbReference type="Gene3D" id="3.30.420.100">
    <property type="match status" value="1"/>
</dbReference>
<dbReference type="HAMAP" id="MF_01337_A">
    <property type="entry name" value="Ribosomal_uL18_A"/>
    <property type="match status" value="1"/>
</dbReference>
<dbReference type="InterPro" id="IPR005485">
    <property type="entry name" value="Rbsml_uL18_euk"/>
</dbReference>
<dbReference type="NCBIfam" id="NF006342">
    <property type="entry name" value="PRK08569.1"/>
    <property type="match status" value="1"/>
</dbReference>
<dbReference type="PANTHER" id="PTHR23410:SF12">
    <property type="entry name" value="LARGE RIBOSOMAL SUBUNIT PROTEIN UL18"/>
    <property type="match status" value="1"/>
</dbReference>
<dbReference type="PANTHER" id="PTHR23410">
    <property type="entry name" value="RIBOSOMAL PROTEIN L5-RELATED"/>
    <property type="match status" value="1"/>
</dbReference>
<dbReference type="Pfam" id="PF17144">
    <property type="entry name" value="Ribosomal_L5e"/>
    <property type="match status" value="2"/>
</dbReference>
<dbReference type="SUPFAM" id="SSF53137">
    <property type="entry name" value="Translational machinery components"/>
    <property type="match status" value="1"/>
</dbReference>
<evidence type="ECO:0000255" key="1">
    <source>
        <dbReference type="HAMAP-Rule" id="MF_01337"/>
    </source>
</evidence>
<evidence type="ECO:0000305" key="2"/>
<accession>Q8PV31</accession>
<feature type="chain" id="PRO_0000251397" description="Large ribosomal subunit protein uL18">
    <location>
        <begin position="1"/>
        <end position="174"/>
    </location>
</feature>
<gene>
    <name evidence="1" type="primary">rpl18</name>
    <name type="ordered locus">MM_2143</name>
</gene>
<comment type="function">
    <text evidence="1">This is one of the proteins that bind and probably mediate the attachment of the 5S RNA into the large ribosomal subunit, where it forms part of the central protuberance.</text>
</comment>
<comment type="subunit">
    <text evidence="1">Part of the 50S ribosomal subunit. Contacts the 5S and 23S rRNAs.</text>
</comment>
<comment type="similarity">
    <text evidence="1">Belongs to the universal ribosomal protein uL18 family.</text>
</comment>
<comment type="sequence caution" evidence="2">
    <conflict type="erroneous initiation">
        <sequence resource="EMBL-CDS" id="AAM31839"/>
    </conflict>
    <text>Extended N-terminus.</text>
</comment>
<keyword id="KW-0687">Ribonucleoprotein</keyword>
<keyword id="KW-0689">Ribosomal protein</keyword>
<keyword id="KW-0694">RNA-binding</keyword>
<keyword id="KW-0699">rRNA-binding</keyword>
<name>RL18_METMA</name>
<organism>
    <name type="scientific">Methanosarcina mazei (strain ATCC BAA-159 / DSM 3647 / Goe1 / Go1 / JCM 11833 / OCM 88)</name>
    <name type="common">Methanosarcina frisia</name>
    <dbReference type="NCBI Taxonomy" id="192952"/>
    <lineage>
        <taxon>Archaea</taxon>
        <taxon>Methanobacteriati</taxon>
        <taxon>Methanobacteriota</taxon>
        <taxon>Stenosarchaea group</taxon>
        <taxon>Methanomicrobia</taxon>
        <taxon>Methanosarcinales</taxon>
        <taxon>Methanosarcinaceae</taxon>
        <taxon>Methanosarcina</taxon>
    </lineage>
</organism>
<reference key="1">
    <citation type="journal article" date="2002" name="J. Mol. Microbiol. Biotechnol.">
        <title>The genome of Methanosarcina mazei: evidence for lateral gene transfer between Bacteria and Archaea.</title>
        <authorList>
            <person name="Deppenmeier U."/>
            <person name="Johann A."/>
            <person name="Hartsch T."/>
            <person name="Merkl R."/>
            <person name="Schmitz R.A."/>
            <person name="Martinez-Arias R."/>
            <person name="Henne A."/>
            <person name="Wiezer A."/>
            <person name="Baeumer S."/>
            <person name="Jacobi C."/>
            <person name="Brueggemann H."/>
            <person name="Lienard T."/>
            <person name="Christmann A."/>
            <person name="Boemecke M."/>
            <person name="Steckel S."/>
            <person name="Bhattacharyya A."/>
            <person name="Lykidis A."/>
            <person name="Overbeek R."/>
            <person name="Klenk H.-P."/>
            <person name="Gunsalus R.P."/>
            <person name="Fritz H.-J."/>
            <person name="Gottschalk G."/>
        </authorList>
    </citation>
    <scope>NUCLEOTIDE SEQUENCE [LARGE SCALE GENOMIC DNA]</scope>
    <source>
        <strain>ATCC BAA-159 / DSM 3647 / Goe1 / Go1 / JCM 11833 / OCM 88</strain>
    </source>
</reference>
<proteinExistence type="inferred from homology"/>
<sequence>MATGPRYKVPFRRRREGRTNYHLRLKLLLSGQDRVVVRKSARNVQIQLLAPTPEGDITYSSAVSSELAKYGYTGATGNTTAAYLTGLLFGLKSLQKGYEGGILDIGLQASSAGSRVYAALKGIVDSGFEIPCSSDVFPSDERIRGEHIAEYREESSDLPEQFEATKEKIFAEFS</sequence>